<organism>
    <name type="scientific">Bacillus licheniformis (strain ATCC 14580 / DSM 13 / JCM 2505 / CCUG 7422 / NBRC 12200 / NCIMB 9375 / NCTC 10341 / NRRL NRS-1264 / Gibson 46)</name>
    <dbReference type="NCBI Taxonomy" id="279010"/>
    <lineage>
        <taxon>Bacteria</taxon>
        <taxon>Bacillati</taxon>
        <taxon>Bacillota</taxon>
        <taxon>Bacilli</taxon>
        <taxon>Bacillales</taxon>
        <taxon>Bacillaceae</taxon>
        <taxon>Bacillus</taxon>
    </lineage>
</organism>
<evidence type="ECO:0000255" key="1">
    <source>
        <dbReference type="HAMAP-Rule" id="MF_01328"/>
    </source>
</evidence>
<evidence type="ECO:0000256" key="2">
    <source>
        <dbReference type="SAM" id="MobiDB-lite"/>
    </source>
</evidence>
<evidence type="ECO:0000305" key="3"/>
<name>RL4_BACLD</name>
<dbReference type="EMBL" id="AE017333">
    <property type="protein sequence ID" value="AAU39108.1"/>
    <property type="molecule type" value="Genomic_DNA"/>
</dbReference>
<dbReference type="EMBL" id="CP000002">
    <property type="protein sequence ID" value="AAU21763.1"/>
    <property type="molecule type" value="Genomic_DNA"/>
</dbReference>
<dbReference type="RefSeq" id="WP_003178327.1">
    <property type="nucleotide sequence ID" value="NC_006322.1"/>
</dbReference>
<dbReference type="SMR" id="Q65PA6"/>
<dbReference type="STRING" id="279010.BL01052"/>
<dbReference type="GeneID" id="92858902"/>
<dbReference type="KEGG" id="bld:BLi00134"/>
<dbReference type="KEGG" id="bli:BL01052"/>
<dbReference type="eggNOG" id="COG0088">
    <property type="taxonomic scope" value="Bacteria"/>
</dbReference>
<dbReference type="HOGENOM" id="CLU_041575_5_2_9"/>
<dbReference type="Proteomes" id="UP000000606">
    <property type="component" value="Chromosome"/>
</dbReference>
<dbReference type="GO" id="GO:1990904">
    <property type="term" value="C:ribonucleoprotein complex"/>
    <property type="evidence" value="ECO:0007669"/>
    <property type="project" value="UniProtKB-KW"/>
</dbReference>
<dbReference type="GO" id="GO:0005840">
    <property type="term" value="C:ribosome"/>
    <property type="evidence" value="ECO:0007669"/>
    <property type="project" value="UniProtKB-KW"/>
</dbReference>
<dbReference type="GO" id="GO:0019843">
    <property type="term" value="F:rRNA binding"/>
    <property type="evidence" value="ECO:0007669"/>
    <property type="project" value="UniProtKB-UniRule"/>
</dbReference>
<dbReference type="GO" id="GO:0003735">
    <property type="term" value="F:structural constituent of ribosome"/>
    <property type="evidence" value="ECO:0007669"/>
    <property type="project" value="InterPro"/>
</dbReference>
<dbReference type="GO" id="GO:0006412">
    <property type="term" value="P:translation"/>
    <property type="evidence" value="ECO:0007669"/>
    <property type="project" value="UniProtKB-UniRule"/>
</dbReference>
<dbReference type="FunFam" id="3.40.1370.10:FF:000003">
    <property type="entry name" value="50S ribosomal protein L4"/>
    <property type="match status" value="1"/>
</dbReference>
<dbReference type="Gene3D" id="3.40.1370.10">
    <property type="match status" value="1"/>
</dbReference>
<dbReference type="HAMAP" id="MF_01328_B">
    <property type="entry name" value="Ribosomal_uL4_B"/>
    <property type="match status" value="1"/>
</dbReference>
<dbReference type="InterPro" id="IPR002136">
    <property type="entry name" value="Ribosomal_uL4"/>
</dbReference>
<dbReference type="InterPro" id="IPR013005">
    <property type="entry name" value="Ribosomal_uL4-like"/>
</dbReference>
<dbReference type="InterPro" id="IPR023574">
    <property type="entry name" value="Ribosomal_uL4_dom_sf"/>
</dbReference>
<dbReference type="NCBIfam" id="TIGR03953">
    <property type="entry name" value="rplD_bact"/>
    <property type="match status" value="1"/>
</dbReference>
<dbReference type="PANTHER" id="PTHR10746">
    <property type="entry name" value="50S RIBOSOMAL PROTEIN L4"/>
    <property type="match status" value="1"/>
</dbReference>
<dbReference type="PANTHER" id="PTHR10746:SF6">
    <property type="entry name" value="LARGE RIBOSOMAL SUBUNIT PROTEIN UL4M"/>
    <property type="match status" value="1"/>
</dbReference>
<dbReference type="Pfam" id="PF00573">
    <property type="entry name" value="Ribosomal_L4"/>
    <property type="match status" value="1"/>
</dbReference>
<dbReference type="SUPFAM" id="SSF52166">
    <property type="entry name" value="Ribosomal protein L4"/>
    <property type="match status" value="1"/>
</dbReference>
<keyword id="KW-1185">Reference proteome</keyword>
<keyword id="KW-0687">Ribonucleoprotein</keyword>
<keyword id="KW-0689">Ribosomal protein</keyword>
<keyword id="KW-0694">RNA-binding</keyword>
<keyword id="KW-0699">rRNA-binding</keyword>
<feature type="chain" id="PRO_0000242340" description="Large ribosomal subunit protein uL4">
    <location>
        <begin position="1"/>
        <end position="207"/>
    </location>
</feature>
<feature type="region of interest" description="Disordered" evidence="2">
    <location>
        <begin position="48"/>
        <end position="86"/>
    </location>
</feature>
<feature type="compositionally biased region" description="Basic residues" evidence="2">
    <location>
        <begin position="60"/>
        <end position="71"/>
    </location>
</feature>
<proteinExistence type="inferred from homology"/>
<protein>
    <recommendedName>
        <fullName evidence="1">Large ribosomal subunit protein uL4</fullName>
    </recommendedName>
    <alternativeName>
        <fullName evidence="3">50S ribosomal protein L4</fullName>
    </alternativeName>
</protein>
<reference key="1">
    <citation type="journal article" date="2004" name="J. Mol. Microbiol. Biotechnol.">
        <title>The complete genome sequence of Bacillus licheniformis DSM13, an organism with great industrial potential.</title>
        <authorList>
            <person name="Veith B."/>
            <person name="Herzberg C."/>
            <person name="Steckel S."/>
            <person name="Feesche J."/>
            <person name="Maurer K.H."/>
            <person name="Ehrenreich P."/>
            <person name="Baeumer S."/>
            <person name="Henne A."/>
            <person name="Liesegang H."/>
            <person name="Merkl R."/>
            <person name="Ehrenreich A."/>
            <person name="Gottschalk G."/>
        </authorList>
    </citation>
    <scope>NUCLEOTIDE SEQUENCE [LARGE SCALE GENOMIC DNA]</scope>
    <source>
        <strain>ATCC 14580 / DSM 13 / JCM 2505 / CCUG 7422 / NBRC 12200 / NCIMB 9375 / NCTC 10341 / NRRL NRS-1264 / Gibson 46</strain>
    </source>
</reference>
<reference key="2">
    <citation type="journal article" date="2004" name="Genome Biol.">
        <title>Complete genome sequence of the industrial bacterium Bacillus licheniformis and comparisons with closely related Bacillus species.</title>
        <authorList>
            <person name="Rey M.W."/>
            <person name="Ramaiya P."/>
            <person name="Nelson B.A."/>
            <person name="Brody-Karpin S.D."/>
            <person name="Zaretsky E.J."/>
            <person name="Tang M."/>
            <person name="Lopez de Leon A."/>
            <person name="Xiang H."/>
            <person name="Gusti V."/>
            <person name="Clausen I.G."/>
            <person name="Olsen P.B."/>
            <person name="Rasmussen M.D."/>
            <person name="Andersen J.T."/>
            <person name="Joergensen P.L."/>
            <person name="Larsen T.S."/>
            <person name="Sorokin A."/>
            <person name="Bolotin A."/>
            <person name="Lapidus A."/>
            <person name="Galleron N."/>
            <person name="Ehrlich S.D."/>
            <person name="Berka R.M."/>
        </authorList>
    </citation>
    <scope>NUCLEOTIDE SEQUENCE [LARGE SCALE GENOMIC DNA]</scope>
    <source>
        <strain>ATCC 14580 / DSM 13 / JCM 2505 / CCUG 7422 / NBRC 12200 / NCIMB 9375 / NCTC 10341 / NRRL NRS-1264 / Gibson 46</strain>
    </source>
</reference>
<accession>Q65PA6</accession>
<accession>Q62ZP5</accession>
<comment type="function">
    <text evidence="1">One of the primary rRNA binding proteins, this protein initially binds near the 5'-end of the 23S rRNA. It is important during the early stages of 50S assembly. It makes multiple contacts with different domains of the 23S rRNA in the assembled 50S subunit and ribosome.</text>
</comment>
<comment type="function">
    <text evidence="1">Forms part of the polypeptide exit tunnel.</text>
</comment>
<comment type="subunit">
    <text evidence="1">Part of the 50S ribosomal subunit.</text>
</comment>
<comment type="similarity">
    <text evidence="1">Belongs to the universal ribosomal protein uL4 family.</text>
</comment>
<sequence>MPKVALYNQNGSTAGDIELNDSVFGIEPNESVVFDAILMQRASLRQGTHKVKNRSEVRGGGRKPWRQKGTGRARQGSIRSPQWRGGGIVFGPTPRSYAYKLPKKVRRLAIKSALSSKVNDNNLIVLEDLNLDAVKTKEMAAILKGLSIEKKALIVTADANETVELSARNLPGVTVVEANGINVLDVVGHEKLVMTKAAVEKVEEVLA</sequence>
<gene>
    <name evidence="1" type="primary">rplD</name>
    <name type="ordered locus">BLi00134</name>
    <name type="ordered locus">BL01052</name>
</gene>